<comment type="function">
    <text evidence="1">Specifically methylates the N4 position of cytidine in position 1402 (C1402) of 16S rRNA.</text>
</comment>
<comment type="catalytic activity">
    <reaction evidence="1">
        <text>cytidine(1402) in 16S rRNA + S-adenosyl-L-methionine = N(4)-methylcytidine(1402) in 16S rRNA + S-adenosyl-L-homocysteine + H(+)</text>
        <dbReference type="Rhea" id="RHEA:42928"/>
        <dbReference type="Rhea" id="RHEA-COMP:10286"/>
        <dbReference type="Rhea" id="RHEA-COMP:10287"/>
        <dbReference type="ChEBI" id="CHEBI:15378"/>
        <dbReference type="ChEBI" id="CHEBI:57856"/>
        <dbReference type="ChEBI" id="CHEBI:59789"/>
        <dbReference type="ChEBI" id="CHEBI:74506"/>
        <dbReference type="ChEBI" id="CHEBI:82748"/>
        <dbReference type="EC" id="2.1.1.199"/>
    </reaction>
</comment>
<comment type="subcellular location">
    <subcellularLocation>
        <location evidence="1">Cytoplasm</location>
    </subcellularLocation>
</comment>
<comment type="similarity">
    <text evidence="1">Belongs to the methyltransferase superfamily. RsmH family.</text>
</comment>
<reference key="1">
    <citation type="submission" date="2007-06" db="EMBL/GenBank/DDBJ databases">
        <authorList>
            <person name="Brinkac L.M."/>
            <person name="Daugherty S."/>
            <person name="Dodson R.J."/>
            <person name="Madupu R."/>
            <person name="Brown J.L."/>
            <person name="Bruce D."/>
            <person name="Detter C."/>
            <person name="Munk C."/>
            <person name="Smith L.A."/>
            <person name="Smith T.J."/>
            <person name="White O."/>
            <person name="Brettin T.S."/>
        </authorList>
    </citation>
    <scope>NUCLEOTIDE SEQUENCE [LARGE SCALE GENOMIC DNA]</scope>
    <source>
        <strain>Langeland / NCTC 10281 / Type F</strain>
    </source>
</reference>
<name>RSMH_CLOBL</name>
<gene>
    <name evidence="1" type="primary">rsmH</name>
    <name type="synonym">mraW</name>
    <name type="ordered locus">CLI_1538</name>
</gene>
<feature type="chain" id="PRO_0000386816" description="Ribosomal RNA small subunit methyltransferase H">
    <location>
        <begin position="1"/>
        <end position="309"/>
    </location>
</feature>
<feature type="binding site" evidence="1">
    <location>
        <begin position="33"/>
        <end position="35"/>
    </location>
    <ligand>
        <name>S-adenosyl-L-methionine</name>
        <dbReference type="ChEBI" id="CHEBI:59789"/>
    </ligand>
</feature>
<feature type="binding site" evidence="1">
    <location>
        <position position="53"/>
    </location>
    <ligand>
        <name>S-adenosyl-L-methionine</name>
        <dbReference type="ChEBI" id="CHEBI:59789"/>
    </ligand>
</feature>
<feature type="binding site" evidence="1">
    <location>
        <position position="79"/>
    </location>
    <ligand>
        <name>S-adenosyl-L-methionine</name>
        <dbReference type="ChEBI" id="CHEBI:59789"/>
    </ligand>
</feature>
<feature type="binding site" evidence="1">
    <location>
        <position position="100"/>
    </location>
    <ligand>
        <name>S-adenosyl-L-methionine</name>
        <dbReference type="ChEBI" id="CHEBI:59789"/>
    </ligand>
</feature>
<feature type="binding site" evidence="1">
    <location>
        <position position="107"/>
    </location>
    <ligand>
        <name>S-adenosyl-L-methionine</name>
        <dbReference type="ChEBI" id="CHEBI:59789"/>
    </ligand>
</feature>
<accession>A7GDE2</accession>
<organism>
    <name type="scientific">Clostridium botulinum (strain Langeland / NCTC 10281 / Type F)</name>
    <dbReference type="NCBI Taxonomy" id="441772"/>
    <lineage>
        <taxon>Bacteria</taxon>
        <taxon>Bacillati</taxon>
        <taxon>Bacillota</taxon>
        <taxon>Clostridia</taxon>
        <taxon>Eubacteriales</taxon>
        <taxon>Clostridiaceae</taxon>
        <taxon>Clostridium</taxon>
    </lineage>
</organism>
<proteinExistence type="inferred from homology"/>
<protein>
    <recommendedName>
        <fullName evidence="1">Ribosomal RNA small subunit methyltransferase H</fullName>
        <ecNumber evidence="1">2.1.1.199</ecNumber>
    </recommendedName>
    <alternativeName>
        <fullName evidence="1">16S rRNA m(4)C1402 methyltransferase</fullName>
    </alternativeName>
    <alternativeName>
        <fullName evidence="1">rRNA (cytosine-N(4)-)-methyltransferase RsmH</fullName>
    </alternativeName>
</protein>
<evidence type="ECO:0000255" key="1">
    <source>
        <dbReference type="HAMAP-Rule" id="MF_01007"/>
    </source>
</evidence>
<dbReference type="EC" id="2.1.1.199" evidence="1"/>
<dbReference type="EMBL" id="CP000728">
    <property type="protein sequence ID" value="ABS40085.1"/>
    <property type="molecule type" value="Genomic_DNA"/>
</dbReference>
<dbReference type="RefSeq" id="WP_011988264.1">
    <property type="nucleotide sequence ID" value="NC_009699.1"/>
</dbReference>
<dbReference type="SMR" id="A7GDE2"/>
<dbReference type="KEGG" id="cbf:CLI_1538"/>
<dbReference type="HOGENOM" id="CLU_038422_2_0_9"/>
<dbReference type="Proteomes" id="UP000002410">
    <property type="component" value="Chromosome"/>
</dbReference>
<dbReference type="GO" id="GO:0005737">
    <property type="term" value="C:cytoplasm"/>
    <property type="evidence" value="ECO:0007669"/>
    <property type="project" value="UniProtKB-SubCell"/>
</dbReference>
<dbReference type="GO" id="GO:0071424">
    <property type="term" value="F:rRNA (cytosine-N4-)-methyltransferase activity"/>
    <property type="evidence" value="ECO:0007669"/>
    <property type="project" value="UniProtKB-UniRule"/>
</dbReference>
<dbReference type="GO" id="GO:0070475">
    <property type="term" value="P:rRNA base methylation"/>
    <property type="evidence" value="ECO:0007669"/>
    <property type="project" value="UniProtKB-UniRule"/>
</dbReference>
<dbReference type="FunFam" id="1.10.150.170:FF:000001">
    <property type="entry name" value="Ribosomal RNA small subunit methyltransferase H"/>
    <property type="match status" value="1"/>
</dbReference>
<dbReference type="Gene3D" id="1.10.150.170">
    <property type="entry name" value="Putative methyltransferase TM0872, insert domain"/>
    <property type="match status" value="1"/>
</dbReference>
<dbReference type="Gene3D" id="3.40.50.150">
    <property type="entry name" value="Vaccinia Virus protein VP39"/>
    <property type="match status" value="1"/>
</dbReference>
<dbReference type="HAMAP" id="MF_01007">
    <property type="entry name" value="16SrRNA_methyltr_H"/>
    <property type="match status" value="1"/>
</dbReference>
<dbReference type="InterPro" id="IPR002903">
    <property type="entry name" value="RsmH"/>
</dbReference>
<dbReference type="InterPro" id="IPR023397">
    <property type="entry name" value="SAM-dep_MeTrfase_MraW_recog"/>
</dbReference>
<dbReference type="InterPro" id="IPR029063">
    <property type="entry name" value="SAM-dependent_MTases_sf"/>
</dbReference>
<dbReference type="NCBIfam" id="TIGR00006">
    <property type="entry name" value="16S rRNA (cytosine(1402)-N(4))-methyltransferase RsmH"/>
    <property type="match status" value="1"/>
</dbReference>
<dbReference type="PANTHER" id="PTHR11265:SF0">
    <property type="entry name" value="12S RRNA N4-METHYLCYTIDINE METHYLTRANSFERASE"/>
    <property type="match status" value="1"/>
</dbReference>
<dbReference type="PANTHER" id="PTHR11265">
    <property type="entry name" value="S-ADENOSYL-METHYLTRANSFERASE MRAW"/>
    <property type="match status" value="1"/>
</dbReference>
<dbReference type="Pfam" id="PF01795">
    <property type="entry name" value="Methyltransf_5"/>
    <property type="match status" value="1"/>
</dbReference>
<dbReference type="PIRSF" id="PIRSF004486">
    <property type="entry name" value="MraW"/>
    <property type="match status" value="1"/>
</dbReference>
<dbReference type="SUPFAM" id="SSF81799">
    <property type="entry name" value="Putative methyltransferase TM0872, insert domain"/>
    <property type="match status" value="1"/>
</dbReference>
<dbReference type="SUPFAM" id="SSF53335">
    <property type="entry name" value="S-adenosyl-L-methionine-dependent methyltransferases"/>
    <property type="match status" value="1"/>
</dbReference>
<keyword id="KW-0963">Cytoplasm</keyword>
<keyword id="KW-0489">Methyltransferase</keyword>
<keyword id="KW-0698">rRNA processing</keyword>
<keyword id="KW-0949">S-adenosyl-L-methionine</keyword>
<keyword id="KW-0808">Transferase</keyword>
<sequence length="309" mass="35527">MEFKHISVLLEETIDSLNIKEDGVYVDCTLGGGGHSKEILKKLSHKGKLIGIDQDTSAIKAAKEKLKDYENIIYVHNNFYNIDSILEELDIDKVDGIIMDLGVSSYQLDEASRGFSYMKDAPLDMRMNREENFSAYNVVNSYEEEELFKILKNYGEEKFSRKIARFIVEKRTENPIETTGELVEIIRKAIPAKFQREGHPAKRTFQAIRIEVNKELQILNKAIEDSVNRLNKDGRLSIITFHSLEDRIVKVKFKELEKPCTCPPSFPICVCGKEPQIKIITKKPIEPSKEEKEINSRSRSAKLRVCRKI</sequence>